<evidence type="ECO:0000250" key="1"/>
<evidence type="ECO:0000255" key="2"/>
<evidence type="ECO:0000255" key="3">
    <source>
        <dbReference type="PROSITE-ProRule" id="PRU00521"/>
    </source>
</evidence>
<evidence type="ECO:0000256" key="4">
    <source>
        <dbReference type="SAM" id="MobiDB-lite"/>
    </source>
</evidence>
<sequence length="346" mass="38203">MASIILINFSETDTLHLGSVNDHIMPRIGYTILSIIMALSSTFGIILNMVVIIVTVRYKQLRQPLNYALVNLAVADLGCPVFGGLLTAVTNAMGYFSLGRVGCVLEGFAVAFFGIAGLCSVAVIAVDRYMVVCRPLGAVMFQTKHALAGVVFSWVWSFIWNTPPLFGWGSYQLEGVMTSCAPNWYRRDPVNVSYILCYFMLCFALPFATIIFSYMHLLHTLWQVAKLQVADSGSTAKVEVQVARMVVIMVMAFLLTWLPYAAFALTVIIDSNIYINPVIGTIPAYLAKSSTVFNPIIYIFMNRQFRDYALPCLLCGKNPWAAKEGRDSDTNTLTTTVSKNTSVSPL</sequence>
<comment type="subcellular location">
    <subcellularLocation>
        <location>Membrane</location>
        <topology>Multi-pass membrane protein</topology>
    </subcellularLocation>
</comment>
<comment type="tissue specificity">
    <text>Parapineal organ.</text>
</comment>
<comment type="PTM">
    <text evidence="1">Phosphorylated on some or all of the serine and threonine residues present in the C-terminal region.</text>
</comment>
<comment type="similarity">
    <text evidence="3">Belongs to the G-protein coupled receptor 1 family. Opsin subfamily.</text>
</comment>
<reference key="1">
    <citation type="journal article" date="1997" name="J. Neurosci.">
        <title>Parapinopsin, a novel catfish opsin localized to the parapineal organ, defines a new gene family.</title>
        <authorList>
            <person name="Blackshaw S."/>
            <person name="Snyder S.H."/>
        </authorList>
    </citation>
    <scope>NUCLEOTIDE SEQUENCE [MRNA]</scope>
</reference>
<name>OPSP_ICTPU</name>
<accession>O42266</accession>
<organism>
    <name type="scientific">Ictalurus punctatus</name>
    <name type="common">Channel catfish</name>
    <name type="synonym">Silurus punctatus</name>
    <dbReference type="NCBI Taxonomy" id="7998"/>
    <lineage>
        <taxon>Eukaryota</taxon>
        <taxon>Metazoa</taxon>
        <taxon>Chordata</taxon>
        <taxon>Craniata</taxon>
        <taxon>Vertebrata</taxon>
        <taxon>Euteleostomi</taxon>
        <taxon>Actinopterygii</taxon>
        <taxon>Neopterygii</taxon>
        <taxon>Teleostei</taxon>
        <taxon>Ostariophysi</taxon>
        <taxon>Siluriformes</taxon>
        <taxon>Ictaluridae</taxon>
        <taxon>Ictalurus</taxon>
    </lineage>
</organism>
<keyword id="KW-0157">Chromophore</keyword>
<keyword id="KW-1015">Disulfide bond</keyword>
<keyword id="KW-0297">G-protein coupled receptor</keyword>
<keyword id="KW-0325">Glycoprotein</keyword>
<keyword id="KW-0449">Lipoprotein</keyword>
<keyword id="KW-0472">Membrane</keyword>
<keyword id="KW-0564">Palmitate</keyword>
<keyword id="KW-0597">Phosphoprotein</keyword>
<keyword id="KW-0600">Photoreceptor protein</keyword>
<keyword id="KW-0675">Receptor</keyword>
<keyword id="KW-0681">Retinal protein</keyword>
<keyword id="KW-0716">Sensory transduction</keyword>
<keyword id="KW-0807">Transducer</keyword>
<keyword id="KW-0812">Transmembrane</keyword>
<keyword id="KW-1133">Transmembrane helix</keyword>
<proteinExistence type="evidence at transcript level"/>
<feature type="chain" id="PRO_0000197809" description="Parapinopsin">
    <location>
        <begin position="1"/>
        <end position="346"/>
    </location>
</feature>
<feature type="topological domain" description="Extracellular" evidence="2">
    <location>
        <begin position="1"/>
        <end position="29"/>
    </location>
</feature>
<feature type="transmembrane region" description="Helical; Name=1" evidence="2">
    <location>
        <begin position="30"/>
        <end position="54"/>
    </location>
</feature>
<feature type="topological domain" description="Cytoplasmic" evidence="2">
    <location>
        <begin position="55"/>
        <end position="66"/>
    </location>
</feature>
<feature type="transmembrane region" description="Helical; Name=2" evidence="2">
    <location>
        <begin position="67"/>
        <end position="91"/>
    </location>
</feature>
<feature type="topological domain" description="Extracellular" evidence="2">
    <location>
        <begin position="92"/>
        <end position="106"/>
    </location>
</feature>
<feature type="transmembrane region" description="Helical; Name=3" evidence="2">
    <location>
        <begin position="107"/>
        <end position="126"/>
    </location>
</feature>
<feature type="topological domain" description="Cytoplasmic" evidence="2">
    <location>
        <begin position="127"/>
        <end position="145"/>
    </location>
</feature>
<feature type="transmembrane region" description="Helical; Name=4" evidence="2">
    <location>
        <begin position="146"/>
        <end position="169"/>
    </location>
</feature>
<feature type="topological domain" description="Extracellular" evidence="2">
    <location>
        <begin position="170"/>
        <end position="193"/>
    </location>
</feature>
<feature type="transmembrane region" description="Helical; Name=5" evidence="2">
    <location>
        <begin position="194"/>
        <end position="221"/>
    </location>
</feature>
<feature type="topological domain" description="Cytoplasmic" evidence="2">
    <location>
        <begin position="222"/>
        <end position="244"/>
    </location>
</feature>
<feature type="transmembrane region" description="Helical; Name=6" evidence="2">
    <location>
        <begin position="245"/>
        <end position="268"/>
    </location>
</feature>
<feature type="topological domain" description="Extracellular" evidence="2">
    <location>
        <begin position="269"/>
        <end position="276"/>
    </location>
</feature>
<feature type="transmembrane region" description="Helical; Name=7" evidence="2">
    <location>
        <begin position="277"/>
        <end position="301"/>
    </location>
</feature>
<feature type="topological domain" description="Cytoplasmic" evidence="2">
    <location>
        <begin position="302"/>
        <end position="346"/>
    </location>
</feature>
<feature type="region of interest" description="Disordered" evidence="4">
    <location>
        <begin position="325"/>
        <end position="346"/>
    </location>
</feature>
<feature type="compositionally biased region" description="Low complexity" evidence="4">
    <location>
        <begin position="330"/>
        <end position="346"/>
    </location>
</feature>
<feature type="modified residue" description="N6-(retinylidene)lysine" evidence="1">
    <location>
        <position position="288"/>
    </location>
</feature>
<feature type="lipid moiety-binding region" description="S-palmitoyl cysteine" evidence="1">
    <location>
        <position position="315"/>
    </location>
</feature>
<feature type="glycosylation site" description="N-linked (GlcNAc...) asparagine" evidence="2">
    <location>
        <position position="8"/>
    </location>
</feature>
<feature type="glycosylation site" description="N-linked (GlcNAc...) asparagine" evidence="2">
    <location>
        <position position="191"/>
    </location>
</feature>
<feature type="disulfide bond" evidence="3">
    <location>
        <begin position="103"/>
        <end position="180"/>
    </location>
</feature>
<protein>
    <recommendedName>
        <fullName>Parapinopsin</fullName>
    </recommendedName>
</protein>
<dbReference type="EMBL" id="AF028014">
    <property type="protein sequence ID" value="AAB84050.1"/>
    <property type="molecule type" value="mRNA"/>
</dbReference>
<dbReference type="RefSeq" id="NP_001187002.1">
    <property type="nucleotide sequence ID" value="NM_001200073.1"/>
</dbReference>
<dbReference type="SMR" id="O42266"/>
<dbReference type="STRING" id="7998.ENSIPUP00000036410"/>
<dbReference type="GeneID" id="100304471"/>
<dbReference type="KEGG" id="ipu:100304471"/>
<dbReference type="CTD" id="100331083"/>
<dbReference type="OrthoDB" id="2101615at2759"/>
<dbReference type="Proteomes" id="UP000221080">
    <property type="component" value="Chromosome 5"/>
</dbReference>
<dbReference type="GO" id="GO:0016020">
    <property type="term" value="C:membrane"/>
    <property type="evidence" value="ECO:0007669"/>
    <property type="project" value="UniProtKB-SubCell"/>
</dbReference>
<dbReference type="GO" id="GO:0004930">
    <property type="term" value="F:G protein-coupled receptor activity"/>
    <property type="evidence" value="ECO:0007669"/>
    <property type="project" value="UniProtKB-KW"/>
</dbReference>
<dbReference type="GO" id="GO:0009881">
    <property type="term" value="F:photoreceptor activity"/>
    <property type="evidence" value="ECO:0007669"/>
    <property type="project" value="UniProtKB-KW"/>
</dbReference>
<dbReference type="GO" id="GO:0007602">
    <property type="term" value="P:phototransduction"/>
    <property type="evidence" value="ECO:0007669"/>
    <property type="project" value="UniProtKB-KW"/>
</dbReference>
<dbReference type="GO" id="GO:0007601">
    <property type="term" value="P:visual perception"/>
    <property type="evidence" value="ECO:0007669"/>
    <property type="project" value="InterPro"/>
</dbReference>
<dbReference type="CDD" id="cd15075">
    <property type="entry name" value="7tmA_Parapinopsin"/>
    <property type="match status" value="1"/>
</dbReference>
<dbReference type="FunFam" id="1.20.1070.10:FF:000391">
    <property type="entry name" value="Parapinopsin b"/>
    <property type="match status" value="1"/>
</dbReference>
<dbReference type="Gene3D" id="1.20.1070.10">
    <property type="entry name" value="Rhodopsin 7-helix transmembrane proteins"/>
    <property type="match status" value="1"/>
</dbReference>
<dbReference type="InterPro" id="IPR050125">
    <property type="entry name" value="GPCR_opsins"/>
</dbReference>
<dbReference type="InterPro" id="IPR000276">
    <property type="entry name" value="GPCR_Rhodpsn"/>
</dbReference>
<dbReference type="InterPro" id="IPR017452">
    <property type="entry name" value="GPCR_Rhodpsn_7TM"/>
</dbReference>
<dbReference type="InterPro" id="IPR001760">
    <property type="entry name" value="Opsin"/>
</dbReference>
<dbReference type="InterPro" id="IPR027430">
    <property type="entry name" value="Retinal_BS"/>
</dbReference>
<dbReference type="PANTHER" id="PTHR24240">
    <property type="entry name" value="OPSIN"/>
    <property type="match status" value="1"/>
</dbReference>
<dbReference type="Pfam" id="PF00001">
    <property type="entry name" value="7tm_1"/>
    <property type="match status" value="1"/>
</dbReference>
<dbReference type="PRINTS" id="PR00237">
    <property type="entry name" value="GPCRRHODOPSN"/>
</dbReference>
<dbReference type="PRINTS" id="PR00238">
    <property type="entry name" value="OPSIN"/>
</dbReference>
<dbReference type="SUPFAM" id="SSF81321">
    <property type="entry name" value="Family A G protein-coupled receptor-like"/>
    <property type="match status" value="1"/>
</dbReference>
<dbReference type="PROSITE" id="PS00237">
    <property type="entry name" value="G_PROTEIN_RECEP_F1_1"/>
    <property type="match status" value="1"/>
</dbReference>
<dbReference type="PROSITE" id="PS50262">
    <property type="entry name" value="G_PROTEIN_RECEP_F1_2"/>
    <property type="match status" value="1"/>
</dbReference>
<dbReference type="PROSITE" id="PS00238">
    <property type="entry name" value="OPSIN"/>
    <property type="match status" value="1"/>
</dbReference>